<comment type="function">
    <text evidence="1">Cell wall formation. Catalyzes the transfer of a GlcNAc subunit on undecaprenyl-pyrophosphoryl-MurNAc-pentapeptide (lipid intermediate I) to form undecaprenyl-pyrophosphoryl-MurNAc-(pentapeptide)GlcNAc (lipid intermediate II).</text>
</comment>
<comment type="catalytic activity">
    <reaction evidence="1">
        <text>di-trans,octa-cis-undecaprenyl diphospho-N-acetyl-alpha-D-muramoyl-L-alanyl-D-glutamyl-meso-2,6-diaminopimeloyl-D-alanyl-D-alanine + UDP-N-acetyl-alpha-D-glucosamine = di-trans,octa-cis-undecaprenyl diphospho-[N-acetyl-alpha-D-glucosaminyl-(1-&gt;4)]-N-acetyl-alpha-D-muramoyl-L-alanyl-D-glutamyl-meso-2,6-diaminopimeloyl-D-alanyl-D-alanine + UDP + H(+)</text>
        <dbReference type="Rhea" id="RHEA:31227"/>
        <dbReference type="ChEBI" id="CHEBI:15378"/>
        <dbReference type="ChEBI" id="CHEBI:57705"/>
        <dbReference type="ChEBI" id="CHEBI:58223"/>
        <dbReference type="ChEBI" id="CHEBI:61387"/>
        <dbReference type="ChEBI" id="CHEBI:61388"/>
        <dbReference type="EC" id="2.4.1.227"/>
    </reaction>
</comment>
<comment type="pathway">
    <text evidence="1">Cell wall biogenesis; peptidoglycan biosynthesis.</text>
</comment>
<comment type="subcellular location">
    <subcellularLocation>
        <location evidence="1">Cell inner membrane</location>
        <topology evidence="1">Peripheral membrane protein</topology>
        <orientation evidence="1">Cytoplasmic side</orientation>
    </subcellularLocation>
</comment>
<comment type="similarity">
    <text evidence="1">Belongs to the glycosyltransferase 28 family. MurG subfamily.</text>
</comment>
<name>MURG_RICTY</name>
<sequence>MKKIILVAGGTGGHFFPAVALGEELIKRGYIVHFITDLRCKKYINKDMKIIFYLLDLKRFSNILLFLPTLLIAFLKSIKLIYHIKSCVIIGFGGYPVIAPMFAAIFLRIPIIIHEQNSYLGKVNKFFARFAKKIAISYEDIKNVPEFAKSKIVLTGGIVRKNIRELDSFIYLASQHCPTKLTKTVLTNTLNHFVKARNNKFSNCNIFTLFIFGGSQGAKLFSELIPASIEILMKKQPNLELKIIQQASLAHQVKIKDIYSKLNITYEFAEFFDNIALQYKVANLVISRAGASTIEELTYIGLPTIFIPLPSAADNHQYYNAKLLADNKAGWCLEQNNISAEKLADQILDLISNRQLLEDAAQNLLNRKQEGHLLLSNLIEDTVFL</sequence>
<reference key="1">
    <citation type="journal article" date="2004" name="J. Bacteriol.">
        <title>Complete genome sequence of Rickettsia typhi and comparison with sequences of other Rickettsiae.</title>
        <authorList>
            <person name="McLeod M.P."/>
            <person name="Qin X."/>
            <person name="Karpathy S.E."/>
            <person name="Gioia J."/>
            <person name="Highlander S.K."/>
            <person name="Fox G.E."/>
            <person name="McNeill T.Z."/>
            <person name="Jiang H."/>
            <person name="Muzny D."/>
            <person name="Jacob L.S."/>
            <person name="Hawes A.C."/>
            <person name="Sodergren E."/>
            <person name="Gill R."/>
            <person name="Hume J."/>
            <person name="Morgan M."/>
            <person name="Fan G."/>
            <person name="Amin A.G."/>
            <person name="Gibbs R.A."/>
            <person name="Hong C."/>
            <person name="Yu X.-J."/>
            <person name="Walker D.H."/>
            <person name="Weinstock G.M."/>
        </authorList>
    </citation>
    <scope>NUCLEOTIDE SEQUENCE [LARGE SCALE GENOMIC DNA]</scope>
    <source>
        <strain>ATCC VR-144 / Wilmington</strain>
    </source>
</reference>
<protein>
    <recommendedName>
        <fullName evidence="1">UDP-N-acetylglucosamine--N-acetylmuramyl-(pentapeptide) pyrophosphoryl-undecaprenol N-acetylglucosamine transferase</fullName>
        <ecNumber evidence="1">2.4.1.227</ecNumber>
    </recommendedName>
    <alternativeName>
        <fullName evidence="1">Undecaprenyl-PP-MurNAc-pentapeptide-UDPGlcNAc GlcNAc transferase</fullName>
    </alternativeName>
</protein>
<evidence type="ECO:0000255" key="1">
    <source>
        <dbReference type="HAMAP-Rule" id="MF_00033"/>
    </source>
</evidence>
<gene>
    <name evidence="1" type="primary">murG</name>
    <name type="ordered locus">RT0398</name>
</gene>
<keyword id="KW-0131">Cell cycle</keyword>
<keyword id="KW-0132">Cell division</keyword>
<keyword id="KW-0997">Cell inner membrane</keyword>
<keyword id="KW-1003">Cell membrane</keyword>
<keyword id="KW-0133">Cell shape</keyword>
<keyword id="KW-0961">Cell wall biogenesis/degradation</keyword>
<keyword id="KW-0328">Glycosyltransferase</keyword>
<keyword id="KW-0472">Membrane</keyword>
<keyword id="KW-0573">Peptidoglycan synthesis</keyword>
<keyword id="KW-0808">Transferase</keyword>
<feature type="chain" id="PRO_0000225091" description="UDP-N-acetylglucosamine--N-acetylmuramyl-(pentapeptide) pyrophosphoryl-undecaprenol N-acetylglucosamine transferase">
    <location>
        <begin position="1"/>
        <end position="385"/>
    </location>
</feature>
<feature type="binding site" evidence="1">
    <location>
        <begin position="11"/>
        <end position="13"/>
    </location>
    <ligand>
        <name>UDP-N-acetyl-alpha-D-glucosamine</name>
        <dbReference type="ChEBI" id="CHEBI:57705"/>
    </ligand>
</feature>
<feature type="binding site" evidence="1">
    <location>
        <position position="117"/>
    </location>
    <ligand>
        <name>UDP-N-acetyl-alpha-D-glucosamine</name>
        <dbReference type="ChEBI" id="CHEBI:57705"/>
    </ligand>
</feature>
<feature type="binding site" evidence="1">
    <location>
        <position position="160"/>
    </location>
    <ligand>
        <name>UDP-N-acetyl-alpha-D-glucosamine</name>
        <dbReference type="ChEBI" id="CHEBI:57705"/>
    </ligand>
</feature>
<feature type="binding site" evidence="1">
    <location>
        <position position="215"/>
    </location>
    <ligand>
        <name>UDP-N-acetyl-alpha-D-glucosamine</name>
        <dbReference type="ChEBI" id="CHEBI:57705"/>
    </ligand>
</feature>
<feature type="binding site" evidence="1">
    <location>
        <position position="317"/>
    </location>
    <ligand>
        <name>UDP-N-acetyl-alpha-D-glucosamine</name>
        <dbReference type="ChEBI" id="CHEBI:57705"/>
    </ligand>
</feature>
<accession>Q68WW7</accession>
<dbReference type="EC" id="2.4.1.227" evidence="1"/>
<dbReference type="EMBL" id="AE017197">
    <property type="protein sequence ID" value="AAU03875.1"/>
    <property type="molecule type" value="Genomic_DNA"/>
</dbReference>
<dbReference type="RefSeq" id="WP_011190859.1">
    <property type="nucleotide sequence ID" value="NC_006142.1"/>
</dbReference>
<dbReference type="SMR" id="Q68WW7"/>
<dbReference type="CAZy" id="GT28">
    <property type="family name" value="Glycosyltransferase Family 28"/>
</dbReference>
<dbReference type="KEGG" id="rty:RT0398"/>
<dbReference type="eggNOG" id="COG0707">
    <property type="taxonomic scope" value="Bacteria"/>
</dbReference>
<dbReference type="HOGENOM" id="CLU_037404_2_1_5"/>
<dbReference type="OrthoDB" id="9808936at2"/>
<dbReference type="UniPathway" id="UPA00219"/>
<dbReference type="Proteomes" id="UP000000604">
    <property type="component" value="Chromosome"/>
</dbReference>
<dbReference type="GO" id="GO:0005886">
    <property type="term" value="C:plasma membrane"/>
    <property type="evidence" value="ECO:0007669"/>
    <property type="project" value="UniProtKB-SubCell"/>
</dbReference>
<dbReference type="GO" id="GO:0051991">
    <property type="term" value="F:UDP-N-acetyl-D-glucosamine:N-acetylmuramoyl-L-alanyl-D-glutamyl-meso-2,6-diaminopimelyl-D-alanyl-D-alanine-diphosphoundecaprenol 4-beta-N-acetylglucosaminlytransferase activity"/>
    <property type="evidence" value="ECO:0007669"/>
    <property type="project" value="RHEA"/>
</dbReference>
<dbReference type="GO" id="GO:0050511">
    <property type="term" value="F:undecaprenyldiphospho-muramoylpentapeptide beta-N-acetylglucosaminyltransferase activity"/>
    <property type="evidence" value="ECO:0007669"/>
    <property type="project" value="UniProtKB-UniRule"/>
</dbReference>
<dbReference type="GO" id="GO:0005975">
    <property type="term" value="P:carbohydrate metabolic process"/>
    <property type="evidence" value="ECO:0007669"/>
    <property type="project" value="InterPro"/>
</dbReference>
<dbReference type="GO" id="GO:0051301">
    <property type="term" value="P:cell division"/>
    <property type="evidence" value="ECO:0007669"/>
    <property type="project" value="UniProtKB-KW"/>
</dbReference>
<dbReference type="GO" id="GO:0071555">
    <property type="term" value="P:cell wall organization"/>
    <property type="evidence" value="ECO:0007669"/>
    <property type="project" value="UniProtKB-KW"/>
</dbReference>
<dbReference type="GO" id="GO:0030259">
    <property type="term" value="P:lipid glycosylation"/>
    <property type="evidence" value="ECO:0007669"/>
    <property type="project" value="UniProtKB-UniRule"/>
</dbReference>
<dbReference type="GO" id="GO:0009252">
    <property type="term" value="P:peptidoglycan biosynthetic process"/>
    <property type="evidence" value="ECO:0007669"/>
    <property type="project" value="UniProtKB-UniRule"/>
</dbReference>
<dbReference type="GO" id="GO:0008360">
    <property type="term" value="P:regulation of cell shape"/>
    <property type="evidence" value="ECO:0007669"/>
    <property type="project" value="UniProtKB-KW"/>
</dbReference>
<dbReference type="CDD" id="cd03785">
    <property type="entry name" value="GT28_MurG"/>
    <property type="match status" value="1"/>
</dbReference>
<dbReference type="Gene3D" id="3.40.50.2000">
    <property type="entry name" value="Glycogen Phosphorylase B"/>
    <property type="match status" value="2"/>
</dbReference>
<dbReference type="HAMAP" id="MF_00033">
    <property type="entry name" value="MurG"/>
    <property type="match status" value="1"/>
</dbReference>
<dbReference type="InterPro" id="IPR006009">
    <property type="entry name" value="GlcNAc_MurG"/>
</dbReference>
<dbReference type="InterPro" id="IPR007235">
    <property type="entry name" value="Glyco_trans_28_C"/>
</dbReference>
<dbReference type="InterPro" id="IPR004276">
    <property type="entry name" value="GlycoTrans_28_N"/>
</dbReference>
<dbReference type="NCBIfam" id="TIGR01133">
    <property type="entry name" value="murG"/>
    <property type="match status" value="1"/>
</dbReference>
<dbReference type="PANTHER" id="PTHR21015:SF22">
    <property type="entry name" value="GLYCOSYLTRANSFERASE"/>
    <property type="match status" value="1"/>
</dbReference>
<dbReference type="PANTHER" id="PTHR21015">
    <property type="entry name" value="UDP-N-ACETYLGLUCOSAMINE--N-ACETYLMURAMYL-(PENTAPEPTIDE) PYROPHOSPHORYL-UNDECAPRENOL N-ACETYLGLUCOSAMINE TRANSFERASE 1"/>
    <property type="match status" value="1"/>
</dbReference>
<dbReference type="Pfam" id="PF04101">
    <property type="entry name" value="Glyco_tran_28_C"/>
    <property type="match status" value="1"/>
</dbReference>
<dbReference type="Pfam" id="PF03033">
    <property type="entry name" value="Glyco_transf_28"/>
    <property type="match status" value="1"/>
</dbReference>
<dbReference type="SUPFAM" id="SSF53756">
    <property type="entry name" value="UDP-Glycosyltransferase/glycogen phosphorylase"/>
    <property type="match status" value="1"/>
</dbReference>
<organism>
    <name type="scientific">Rickettsia typhi (strain ATCC VR-144 / Wilmington)</name>
    <dbReference type="NCBI Taxonomy" id="257363"/>
    <lineage>
        <taxon>Bacteria</taxon>
        <taxon>Pseudomonadati</taxon>
        <taxon>Pseudomonadota</taxon>
        <taxon>Alphaproteobacteria</taxon>
        <taxon>Rickettsiales</taxon>
        <taxon>Rickettsiaceae</taxon>
        <taxon>Rickettsieae</taxon>
        <taxon>Rickettsia</taxon>
        <taxon>typhus group</taxon>
    </lineage>
</organism>
<proteinExistence type="inferred from homology"/>